<sequence>MTTKRKLIGRLVPCRCFRGEEEIISVLDYSHCSLQQVPKEVFNFERTLEELYLDANQIEELPKQLFNCQALRKLSIPDNDLSSLPTSIASLVNLKELDISKNGVQEFPENIKCCKCLTIIEASVNPISKLPDGFTQLLNLTQLYLNDAFLEFLPANFGRLVKLRILELRENHLKTLPKSMHKLAQLERLDLGNNEFSELPEVLDQIQNLRELWMDNNALQVLPGSIGKLKMLVYLDMSKNRIETVDMDISGCEALEDLLLSSNMLQQLPDSIGLLKKLTTLKVDDNQLTMLPNTIGNLSLLEEFDCSCNELESLPPTIGYLHSLRTLAVDENFLPELPREIGSCKNVTVMSLRSNKLEFLPEEIGQMQRLRVLNLSDNRLKNLPFSFTKLKELAALWLSDNQSKALIPLQTEAHPETKQRVLTNYMFPQQPRGDEDFQSDSDSFNPTLWEEQRQQRMTVAFEFEDKKEDDESAGKVKALSCQAPWDRGQRGITLQPARLSGDCCTPWARCDQQIQDMPVPQSDPQLAWGCISGLQQERSMCAPLPVAAQSTTLPSLSGRQVEINLKRYPTPYPEDLKNMVKSVQNLVGKPSHGVRVENSNPTANTEQTVKEKFEHKWPVAPKEITVEDSFVHPANEMRIGELHPSLAETPLYPPKLVLLGKDKKESTDESEVDKTHCLNNSVSSGTYSDYSPSQASSASSNTRMKVGSLQATAKDAVHNSLWGNRIAPPFPQPLDAKPLLSQREAVPPGNIPQRPDRLPMSDAFPDNWTDGSHYDNTGFVSEEAAGENANNNPLLSSKARSVPAHGRRPLIRQERIVGVPLELEQSTHRHTPETEVPPSNPWQNWTRTPSPFEDRTAFPSKLETTPTTSPLPERKDHMKEPTETPGPFSPGVPWEYHDPTPNRSLGNVFSQIHCRPDSSKGVIAISKSTERLSPLMKDIKSNKFKKSQSIDEIDVGTYKVYNIPLENYASGSDHLGSHERPDKFLGPEHGMSSMSRSQSVPMLDDEMLMYGSSKGPPQQKASMTKKVYQFDQSFNPQGAVEVKAEKRIPPPFAHNSEYVQQPSKNIAKDLVSPRAYRGYPPMEQMFSFSQPSVNEDAMVNAQFASQGPRAGFLRRADSLASSTEMAMFRRVSEPHELPPGDRYGRATYRGGLEGQSSISMTDPQFLKRNGRYEDEHPSYQEVKAQAGSFPAKNLTQRRPLSARSYSTESYGASQTRPVSARPTMAALLEKIPSDYNLGNYGDKTSDNSDIKTRPTPVKGEESCGKMPADWRQQLLRHIEARRLDRTPSQQSNILDNGQEDVSPSGQWNPYPLGRRDVPPDTITKKAGSHIQTLMGSQSLQHRSREQQPYEGNINKVTIQQFQSPLPIQIPSSQATRGPQPGRCLIQTKGQRSMDGYPEQFCVRIEKNPGLGFSISGGISGQGNPFKPSDKGIFVTRVQPDGPASNLLQPGDKILQANGHSFVHMEHEKAVLLLKSFQNTVDLVIQRELTV</sequence>
<name>LRRC7_MOUSE</name>
<comment type="function">
    <text evidence="6">Required for normal synaptic spine architecture and function. Necessary for DISC1 and GRM5 localization to postsynaptic density complexes and for both N-methyl D-aspartate receptor-dependent and metabotropic glutamate receptor-dependent long term depression.</text>
</comment>
<comment type="subunit">
    <text evidence="2 3">Interacts with CNKSR2 and DLG4 (By similarity). Interacts with CTNND2/Catenin delta-2. Forms a complex with N-cadherin through CTNND2. Interacts with CAMK2A (By similarity).</text>
</comment>
<comment type="subcellular location">
    <subcellularLocation>
        <location evidence="1">Cytoplasm</location>
    </subcellularLocation>
    <subcellularLocation>
        <location evidence="6">Postsynaptic density</location>
    </subcellularLocation>
</comment>
<comment type="tissue specificity">
    <text evidence="6">Expressed in brain (at protein level).</text>
</comment>
<comment type="disruption phenotype">
    <text evidence="6">Mutant mice are viable and were born at the expected Mendelian ratio, but they have a mortality rate of about 20%. They show early growth retardation. Mutant animals exhibit behavioral abnormalities, including clasping when suspended by the tail, impaired both hippocampus-dependent and hippocampus-independent short-term memories and absence of acoustic prepulse inhibition. They also exhibit significantly higher levels of anxiety. They become hyperactive in response to stress or novelty, but are more sedentary than wild-type in a familiar environment. Males have a profound deficit in nest-making behavior and were aggressive when group-housed, even with littermates.</text>
</comment>
<comment type="similarity">
    <text evidence="7">Belongs to the LAP (LRR and PDZ) protein family.</text>
</comment>
<comment type="sequence caution" evidence="7">
    <conflict type="erroneous initiation">
        <sequence resource="EMBL-CDS" id="BAC65780"/>
    </conflict>
    <text>Extended N-terminus.</text>
</comment>
<keyword id="KW-0963">Cytoplasm</keyword>
<keyword id="KW-0433">Leucine-rich repeat</keyword>
<keyword id="KW-0488">Methylation</keyword>
<keyword id="KW-0597">Phosphoprotein</keyword>
<keyword id="KW-1185">Reference proteome</keyword>
<keyword id="KW-0677">Repeat</keyword>
<keyword id="KW-0770">Synapse</keyword>
<feature type="chain" id="PRO_0000188299" description="Leucine-rich repeat-containing protein 7">
    <location>
        <begin position="1"/>
        <end position="1490"/>
    </location>
</feature>
<feature type="repeat" description="LRR 1">
    <location>
        <begin position="23"/>
        <end position="44"/>
    </location>
</feature>
<feature type="repeat" description="LRR 2">
    <location>
        <begin position="47"/>
        <end position="68"/>
    </location>
</feature>
<feature type="repeat" description="LRR 3">
    <location>
        <begin position="70"/>
        <end position="91"/>
    </location>
</feature>
<feature type="repeat" description="LRR 4">
    <location>
        <begin position="93"/>
        <end position="114"/>
    </location>
</feature>
<feature type="repeat" description="LRR 5">
    <location>
        <begin position="116"/>
        <end position="137"/>
    </location>
</feature>
<feature type="repeat" description="LRR 6">
    <location>
        <begin position="139"/>
        <end position="161"/>
    </location>
</feature>
<feature type="repeat" description="LRR 7">
    <location>
        <begin position="162"/>
        <end position="183"/>
    </location>
</feature>
<feature type="repeat" description="LRR 8">
    <location>
        <begin position="185"/>
        <end position="206"/>
    </location>
</feature>
<feature type="repeat" description="LRR 9">
    <location>
        <begin position="208"/>
        <end position="229"/>
    </location>
</feature>
<feature type="repeat" description="LRR 10">
    <location>
        <begin position="231"/>
        <end position="253"/>
    </location>
</feature>
<feature type="repeat" description="LRR 11">
    <location>
        <begin position="254"/>
        <end position="275"/>
    </location>
</feature>
<feature type="repeat" description="LRR 12">
    <location>
        <begin position="277"/>
        <end position="298"/>
    </location>
</feature>
<feature type="repeat" description="LRR 13">
    <location>
        <begin position="300"/>
        <end position="321"/>
    </location>
</feature>
<feature type="repeat" description="LRR 14">
    <location>
        <begin position="323"/>
        <end position="344"/>
    </location>
</feature>
<feature type="repeat" description="LRR 15">
    <location>
        <begin position="346"/>
        <end position="367"/>
    </location>
</feature>
<feature type="repeat" description="LRR 16">
    <location>
        <begin position="369"/>
        <end position="391"/>
    </location>
</feature>
<feature type="repeat" description="LRR 17">
    <location>
        <begin position="392"/>
        <end position="413"/>
    </location>
</feature>
<feature type="domain" description="PDZ" evidence="4">
    <location>
        <begin position="1398"/>
        <end position="1488"/>
    </location>
</feature>
<feature type="region of interest" description="Disordered" evidence="5">
    <location>
        <begin position="663"/>
        <end position="704"/>
    </location>
</feature>
<feature type="region of interest" description="Disordered" evidence="5">
    <location>
        <begin position="785"/>
        <end position="807"/>
    </location>
</feature>
<feature type="region of interest" description="Disordered" evidence="5">
    <location>
        <begin position="822"/>
        <end position="899"/>
    </location>
</feature>
<feature type="region of interest" description="Disordered" evidence="5">
    <location>
        <begin position="1134"/>
        <end position="1158"/>
    </location>
</feature>
<feature type="region of interest" description="Disordered" evidence="5">
    <location>
        <begin position="1196"/>
        <end position="1218"/>
    </location>
</feature>
<feature type="region of interest" description="Disordered" evidence="5">
    <location>
        <begin position="1238"/>
        <end position="1265"/>
    </location>
</feature>
<feature type="region of interest" description="Disordered" evidence="5">
    <location>
        <begin position="1282"/>
        <end position="1312"/>
    </location>
</feature>
<feature type="compositionally biased region" description="Basic and acidic residues" evidence="5">
    <location>
        <begin position="663"/>
        <end position="676"/>
    </location>
</feature>
<feature type="compositionally biased region" description="Polar residues" evidence="5">
    <location>
        <begin position="677"/>
        <end position="686"/>
    </location>
</feature>
<feature type="compositionally biased region" description="Low complexity" evidence="5">
    <location>
        <begin position="687"/>
        <end position="700"/>
    </location>
</feature>
<feature type="compositionally biased region" description="Low complexity" evidence="5">
    <location>
        <begin position="859"/>
        <end position="871"/>
    </location>
</feature>
<feature type="compositionally biased region" description="Basic and acidic residues" evidence="5">
    <location>
        <begin position="872"/>
        <end position="882"/>
    </location>
</feature>
<feature type="compositionally biased region" description="Basic and acidic residues" evidence="5">
    <location>
        <begin position="1134"/>
        <end position="1144"/>
    </location>
</feature>
<feature type="compositionally biased region" description="Polar residues" evidence="5">
    <location>
        <begin position="1196"/>
        <end position="1217"/>
    </location>
</feature>
<feature type="compositionally biased region" description="Basic and acidic residues" evidence="5">
    <location>
        <begin position="1243"/>
        <end position="1263"/>
    </location>
</feature>
<feature type="compositionally biased region" description="Polar residues" evidence="5">
    <location>
        <begin position="1286"/>
        <end position="1307"/>
    </location>
</feature>
<feature type="modified residue" description="Phosphoserine" evidence="9">
    <location>
        <position position="439"/>
    </location>
</feature>
<feature type="modified residue" description="Phosphoserine" evidence="2">
    <location>
        <position position="441"/>
    </location>
</feature>
<feature type="modified residue" description="Phosphoserine" evidence="9">
    <location>
        <position position="443"/>
    </location>
</feature>
<feature type="modified residue" description="Phosphothreonine" evidence="9">
    <location>
        <position position="831"/>
    </location>
</feature>
<feature type="modified residue" description="Phosphoserine" evidence="9">
    <location>
        <position position="850"/>
    </location>
</feature>
<feature type="modified residue" description="Phosphothreonine" evidence="9">
    <location>
        <position position="865"/>
    </location>
</feature>
<feature type="modified residue" description="Phosphoserine" evidence="9">
    <location>
        <position position="869"/>
    </location>
</feature>
<feature type="modified residue" description="Phosphoserine" evidence="9">
    <location>
        <position position="947"/>
    </location>
</feature>
<feature type="modified residue" description="Phosphoserine" evidence="9">
    <location>
        <position position="949"/>
    </location>
</feature>
<feature type="modified residue" description="Phosphoserine" evidence="9">
    <location>
        <position position="1118"/>
    </location>
</feature>
<feature type="modified residue" description="Omega-N-methylarginine" evidence="10">
    <location>
        <position position="1149"/>
    </location>
</feature>
<feature type="modified residue" description="Phosphoserine" evidence="9">
    <location>
        <position position="1233"/>
    </location>
</feature>
<feature type="modified residue" description="Phosphoserine" evidence="2">
    <location>
        <position position="1288"/>
    </location>
</feature>
<feature type="modified residue" description="Phosphoserine" evidence="8 9">
    <location>
        <position position="1392"/>
    </location>
</feature>
<dbReference type="EMBL" id="AK122498">
    <property type="protein sequence ID" value="BAC65780.1"/>
    <property type="status" value="ALT_INIT"/>
    <property type="molecule type" value="mRNA"/>
</dbReference>
<dbReference type="RefSeq" id="NP_001278381.1">
    <property type="nucleotide sequence ID" value="NM_001291452.1"/>
</dbReference>
<dbReference type="SMR" id="Q80TE7"/>
<dbReference type="BioGRID" id="232388">
    <property type="interactions" value="27"/>
</dbReference>
<dbReference type="FunCoup" id="Q80TE7">
    <property type="interactions" value="224"/>
</dbReference>
<dbReference type="IntAct" id="Q80TE7">
    <property type="interactions" value="8"/>
</dbReference>
<dbReference type="MINT" id="Q80TE7"/>
<dbReference type="STRING" id="10090.ENSMUSP00000142498"/>
<dbReference type="GlyGen" id="Q80TE7">
    <property type="glycosylation" value="5 sites, 1 N-linked glycan (1 site), 1 O-linked glycan (4 sites)"/>
</dbReference>
<dbReference type="iPTMnet" id="Q80TE7"/>
<dbReference type="PhosphoSitePlus" id="Q80TE7"/>
<dbReference type="SwissPalm" id="Q80TE7"/>
<dbReference type="PaxDb" id="10090-ENSMUSP00000101659"/>
<dbReference type="ProteomicsDB" id="252526"/>
<dbReference type="GeneID" id="242274"/>
<dbReference type="KEGG" id="mmu:242274"/>
<dbReference type="UCSC" id="uc008rvx.2">
    <property type="organism name" value="mouse"/>
</dbReference>
<dbReference type="AGR" id="MGI:2676665"/>
<dbReference type="CTD" id="57554"/>
<dbReference type="MGI" id="MGI:2676665">
    <property type="gene designation" value="Lrrc7"/>
</dbReference>
<dbReference type="eggNOG" id="KOG0619">
    <property type="taxonomic scope" value="Eukaryota"/>
</dbReference>
<dbReference type="InParanoid" id="Q80TE7"/>
<dbReference type="OrthoDB" id="2187496at2759"/>
<dbReference type="PhylomeDB" id="Q80TE7"/>
<dbReference type="Reactome" id="R-MMU-438066">
    <property type="pathway name" value="Unblocking of NMDA receptors, glutamate binding and activation"/>
</dbReference>
<dbReference type="Reactome" id="R-MMU-5673001">
    <property type="pathway name" value="RAF/MAP kinase cascade"/>
</dbReference>
<dbReference type="Reactome" id="R-MMU-6798695">
    <property type="pathway name" value="Neutrophil degranulation"/>
</dbReference>
<dbReference type="BioGRID-ORCS" id="242274">
    <property type="hits" value="1 hit in 77 CRISPR screens"/>
</dbReference>
<dbReference type="CD-CODE" id="CE726F99">
    <property type="entry name" value="Postsynaptic density"/>
</dbReference>
<dbReference type="ChiTaRS" id="Lrrc7">
    <property type="organism name" value="mouse"/>
</dbReference>
<dbReference type="PRO" id="PR:Q80TE7"/>
<dbReference type="Proteomes" id="UP000000589">
    <property type="component" value="Unplaced"/>
</dbReference>
<dbReference type="RNAct" id="Q80TE7">
    <property type="molecule type" value="protein"/>
</dbReference>
<dbReference type="GO" id="GO:0005737">
    <property type="term" value="C:cytoplasm"/>
    <property type="evidence" value="ECO:0007669"/>
    <property type="project" value="UniProtKB-SubCell"/>
</dbReference>
<dbReference type="GO" id="GO:0014069">
    <property type="term" value="C:postsynaptic density"/>
    <property type="evidence" value="ECO:0007669"/>
    <property type="project" value="UniProtKB-SubCell"/>
</dbReference>
<dbReference type="CDD" id="cd06749">
    <property type="entry name" value="PDZ_densin_erbin-like"/>
    <property type="match status" value="1"/>
</dbReference>
<dbReference type="FunFam" id="2.30.42.10:FF:000036">
    <property type="entry name" value="Erbin isoform 7"/>
    <property type="match status" value="1"/>
</dbReference>
<dbReference type="FunFam" id="3.80.10.10:FF:000118">
    <property type="entry name" value="Leucine rich repeat containing 7"/>
    <property type="match status" value="1"/>
</dbReference>
<dbReference type="FunFam" id="3.80.10.10:FF:000061">
    <property type="entry name" value="leucine-rich repeat-containing protein 7 isoform X1"/>
    <property type="match status" value="1"/>
</dbReference>
<dbReference type="Gene3D" id="2.30.42.10">
    <property type="match status" value="1"/>
</dbReference>
<dbReference type="Gene3D" id="3.80.10.10">
    <property type="entry name" value="Ribonuclease Inhibitor"/>
    <property type="match status" value="3"/>
</dbReference>
<dbReference type="InterPro" id="IPR001611">
    <property type="entry name" value="Leu-rich_rpt"/>
</dbReference>
<dbReference type="InterPro" id="IPR003591">
    <property type="entry name" value="Leu-rich_rpt_typical-subtyp"/>
</dbReference>
<dbReference type="InterPro" id="IPR032675">
    <property type="entry name" value="LRR_dom_sf"/>
</dbReference>
<dbReference type="InterPro" id="IPR055414">
    <property type="entry name" value="LRR_R13L4/SHOC2-like"/>
</dbReference>
<dbReference type="InterPro" id="IPR001478">
    <property type="entry name" value="PDZ"/>
</dbReference>
<dbReference type="InterPro" id="IPR036034">
    <property type="entry name" value="PDZ_sf"/>
</dbReference>
<dbReference type="InterPro" id="IPR050614">
    <property type="entry name" value="Synaptic_Scaffolding_LAP-MAGUK"/>
</dbReference>
<dbReference type="PANTHER" id="PTHR23119">
    <property type="entry name" value="DISCS LARGE"/>
    <property type="match status" value="1"/>
</dbReference>
<dbReference type="PANTHER" id="PTHR23119:SF48">
    <property type="entry name" value="LEUCINE-RICH REPEAT-CONTAINING PROTEIN 7"/>
    <property type="match status" value="1"/>
</dbReference>
<dbReference type="Pfam" id="PF23598">
    <property type="entry name" value="LRR_14"/>
    <property type="match status" value="1"/>
</dbReference>
<dbReference type="Pfam" id="PF13855">
    <property type="entry name" value="LRR_8"/>
    <property type="match status" value="3"/>
</dbReference>
<dbReference type="Pfam" id="PF00595">
    <property type="entry name" value="PDZ"/>
    <property type="match status" value="1"/>
</dbReference>
<dbReference type="SMART" id="SM00364">
    <property type="entry name" value="LRR_BAC"/>
    <property type="match status" value="10"/>
</dbReference>
<dbReference type="SMART" id="SM00365">
    <property type="entry name" value="LRR_SD22"/>
    <property type="match status" value="5"/>
</dbReference>
<dbReference type="SMART" id="SM00369">
    <property type="entry name" value="LRR_TYP"/>
    <property type="match status" value="11"/>
</dbReference>
<dbReference type="SMART" id="SM00228">
    <property type="entry name" value="PDZ"/>
    <property type="match status" value="1"/>
</dbReference>
<dbReference type="SUPFAM" id="SSF52058">
    <property type="entry name" value="L domain-like"/>
    <property type="match status" value="1"/>
</dbReference>
<dbReference type="SUPFAM" id="SSF50156">
    <property type="entry name" value="PDZ domain-like"/>
    <property type="match status" value="1"/>
</dbReference>
<dbReference type="SUPFAM" id="SSF52047">
    <property type="entry name" value="RNI-like"/>
    <property type="match status" value="1"/>
</dbReference>
<dbReference type="PROSITE" id="PS51450">
    <property type="entry name" value="LRR"/>
    <property type="match status" value="15"/>
</dbReference>
<dbReference type="PROSITE" id="PS50106">
    <property type="entry name" value="PDZ"/>
    <property type="match status" value="1"/>
</dbReference>
<organism>
    <name type="scientific">Mus musculus</name>
    <name type="common">Mouse</name>
    <dbReference type="NCBI Taxonomy" id="10090"/>
    <lineage>
        <taxon>Eukaryota</taxon>
        <taxon>Metazoa</taxon>
        <taxon>Chordata</taxon>
        <taxon>Craniata</taxon>
        <taxon>Vertebrata</taxon>
        <taxon>Euteleostomi</taxon>
        <taxon>Mammalia</taxon>
        <taxon>Eutheria</taxon>
        <taxon>Euarchontoglires</taxon>
        <taxon>Glires</taxon>
        <taxon>Rodentia</taxon>
        <taxon>Myomorpha</taxon>
        <taxon>Muroidea</taxon>
        <taxon>Muridae</taxon>
        <taxon>Murinae</taxon>
        <taxon>Mus</taxon>
        <taxon>Mus</taxon>
    </lineage>
</organism>
<evidence type="ECO:0000250" key="1"/>
<evidence type="ECO:0000250" key="2">
    <source>
        <dbReference type="UniProtKB" id="P70587"/>
    </source>
</evidence>
<evidence type="ECO:0000250" key="3">
    <source>
        <dbReference type="UniProtKB" id="Q96NW7"/>
    </source>
</evidence>
<evidence type="ECO:0000255" key="4">
    <source>
        <dbReference type="PROSITE-ProRule" id="PRU00143"/>
    </source>
</evidence>
<evidence type="ECO:0000256" key="5">
    <source>
        <dbReference type="SAM" id="MobiDB-lite"/>
    </source>
</evidence>
<evidence type="ECO:0000269" key="6">
    <source>
    </source>
</evidence>
<evidence type="ECO:0000305" key="7"/>
<evidence type="ECO:0007744" key="8">
    <source>
    </source>
</evidence>
<evidence type="ECO:0007744" key="9">
    <source>
    </source>
</evidence>
<evidence type="ECO:0007744" key="10">
    <source>
    </source>
</evidence>
<accession>Q80TE7</accession>
<reference key="1">
    <citation type="journal article" date="2003" name="DNA Res.">
        <title>Prediction of the coding sequences of mouse homologues of KIAA gene: II. The complete nucleotide sequences of 400 mouse KIAA-homologous cDNAs identified by screening of terminal sequences of cDNA clones randomly sampled from size-fractionated libraries.</title>
        <authorList>
            <person name="Okazaki N."/>
            <person name="Kikuno R."/>
            <person name="Ohara R."/>
            <person name="Inamoto S."/>
            <person name="Aizawa H."/>
            <person name="Yuasa S."/>
            <person name="Nakajima D."/>
            <person name="Nagase T."/>
            <person name="Ohara O."/>
            <person name="Koga H."/>
        </authorList>
    </citation>
    <scope>NUCLEOTIDE SEQUENCE [LARGE SCALE MRNA]</scope>
    <source>
        <tissue>Brain</tissue>
    </source>
</reference>
<reference key="2">
    <citation type="journal article" date="2006" name="Mol. Cell. Proteomics">
        <title>Comprehensive identification of phosphorylation sites in postsynaptic density preparations.</title>
        <authorList>
            <person name="Trinidad J.C."/>
            <person name="Specht C.G."/>
            <person name="Thalhammer A."/>
            <person name="Schoepfer R."/>
            <person name="Burlingame A.L."/>
        </authorList>
    </citation>
    <scope>PHOSPHORYLATION [LARGE SCALE ANALYSIS] AT SER-1392</scope>
    <scope>IDENTIFICATION BY MASS SPECTROMETRY [LARGE SCALE ANALYSIS]</scope>
    <source>
        <tissue>Brain</tissue>
    </source>
</reference>
<reference key="3">
    <citation type="journal article" date="2007" name="Mol. Cell. Proteomics">
        <title>Qualitative and quantitative analyses of protein phosphorylation in naive and stimulated mouse synaptosomal preparations.</title>
        <authorList>
            <person name="Munton R.P."/>
            <person name="Tweedie-Cullen R."/>
            <person name="Livingstone-Zatchej M."/>
            <person name="Weinandy F."/>
            <person name="Waidelich M."/>
            <person name="Longo D."/>
            <person name="Gehrig P."/>
            <person name="Potthast F."/>
            <person name="Rutishauser D."/>
            <person name="Gerrits B."/>
            <person name="Panse C."/>
            <person name="Schlapbach R."/>
            <person name="Mansuy I.M."/>
        </authorList>
    </citation>
    <scope>IDENTIFICATION BY MASS SPECTROMETRY [LARGE SCALE ANALYSIS]</scope>
    <source>
        <tissue>Brain cortex</tissue>
    </source>
</reference>
<reference key="4">
    <citation type="journal article" date="2010" name="Cell">
        <title>A tissue-specific atlas of mouse protein phosphorylation and expression.</title>
        <authorList>
            <person name="Huttlin E.L."/>
            <person name="Jedrychowski M.P."/>
            <person name="Elias J.E."/>
            <person name="Goswami T."/>
            <person name="Rad R."/>
            <person name="Beausoleil S.A."/>
            <person name="Villen J."/>
            <person name="Haas W."/>
            <person name="Sowa M.E."/>
            <person name="Gygi S.P."/>
        </authorList>
    </citation>
    <scope>PHOSPHORYLATION [LARGE SCALE ANALYSIS] AT SER-439; SER-443; THR-831; SER-850; THR-865; SER-869; SER-947; SER-949; SER-1118; SER-1233 AND SER-1392</scope>
    <scope>IDENTIFICATION BY MASS SPECTROMETRY [LARGE SCALE ANALYSIS]</scope>
    <source>
        <tissue>Brain</tissue>
        <tissue>Pancreas</tissue>
    </source>
</reference>
<reference key="5">
    <citation type="journal article" date="2011" name="J. Neurosci.">
        <title>Deletion of densin-180 results in abnormal behaviors associated with mental illness and reduces mGluR5 and DISC1 in the postsynaptic density fraction.</title>
        <authorList>
            <person name="Carlisle H.J."/>
            <person name="Luong T.N."/>
            <person name="Medina-Marino A."/>
            <person name="Schenker L."/>
            <person name="Khorosheva E."/>
            <person name="Indersmitten T."/>
            <person name="Gunapala K.M."/>
            <person name="Steele A.D."/>
            <person name="O'Dell T.J."/>
            <person name="Patterson P.H."/>
            <person name="Kennedy M.B."/>
        </authorList>
    </citation>
    <scope>FUNCTION</scope>
    <scope>SUBCELLULAR LOCATION</scope>
    <scope>TISSUE SPECIFICITY</scope>
    <scope>DISRUPTION PHENOTYPE</scope>
</reference>
<reference key="6">
    <citation type="journal article" date="2014" name="Mol. Cell. Proteomics">
        <title>Immunoaffinity enrichment and mass spectrometry analysis of protein methylation.</title>
        <authorList>
            <person name="Guo A."/>
            <person name="Gu H."/>
            <person name="Zhou J."/>
            <person name="Mulhern D."/>
            <person name="Wang Y."/>
            <person name="Lee K.A."/>
            <person name="Yang V."/>
            <person name="Aguiar M."/>
            <person name="Kornhauser J."/>
            <person name="Jia X."/>
            <person name="Ren J."/>
            <person name="Beausoleil S.A."/>
            <person name="Silva J.C."/>
            <person name="Vemulapalli V."/>
            <person name="Bedford M.T."/>
            <person name="Comb M.J."/>
        </authorList>
    </citation>
    <scope>METHYLATION [LARGE SCALE ANALYSIS] AT ARG-1149</scope>
    <scope>IDENTIFICATION BY MASS SPECTROMETRY [LARGE SCALE ANALYSIS]</scope>
    <source>
        <tissue>Brain</tissue>
    </source>
</reference>
<proteinExistence type="evidence at protein level"/>
<gene>
    <name type="primary">Lrrc7</name>
    <name type="synonym">Kiaa1365</name>
    <name type="synonym">Lap1</name>
</gene>
<protein>
    <recommendedName>
        <fullName>Leucine-rich repeat-containing protein 7</fullName>
    </recommendedName>
    <alternativeName>
        <fullName>Densin-180</fullName>
        <shortName>Densin</shortName>
    </alternativeName>
    <alternativeName>
        <fullName>Protein LAP1</fullName>
    </alternativeName>
</protein>